<protein>
    <recommendedName>
        <fullName evidence="1">UPF0756 membrane protein YeaL</fullName>
    </recommendedName>
</protein>
<accession>B5F873</accession>
<gene>
    <name evidence="1" type="primary">yeaL</name>
    <name type="ordered locus">SeAg_B1897</name>
</gene>
<feature type="chain" id="PRO_0000388921" description="UPF0756 membrane protein YeaL">
    <location>
        <begin position="1"/>
        <end position="148"/>
    </location>
</feature>
<feature type="transmembrane region" description="Helical" evidence="1">
    <location>
        <begin position="14"/>
        <end position="34"/>
    </location>
</feature>
<feature type="transmembrane region" description="Helical" evidence="1">
    <location>
        <begin position="51"/>
        <end position="71"/>
    </location>
</feature>
<feature type="transmembrane region" description="Helical" evidence="1">
    <location>
        <begin position="86"/>
        <end position="106"/>
    </location>
</feature>
<feature type="transmembrane region" description="Helical" evidence="1">
    <location>
        <begin position="121"/>
        <end position="141"/>
    </location>
</feature>
<reference key="1">
    <citation type="journal article" date="2011" name="J. Bacteriol.">
        <title>Comparative genomics of 28 Salmonella enterica isolates: evidence for CRISPR-mediated adaptive sublineage evolution.</title>
        <authorList>
            <person name="Fricke W.F."/>
            <person name="Mammel M.K."/>
            <person name="McDermott P.F."/>
            <person name="Tartera C."/>
            <person name="White D.G."/>
            <person name="Leclerc J.E."/>
            <person name="Ravel J."/>
            <person name="Cebula T.A."/>
        </authorList>
    </citation>
    <scope>NUCLEOTIDE SEQUENCE [LARGE SCALE GENOMIC DNA]</scope>
    <source>
        <strain>SL483</strain>
    </source>
</reference>
<name>YEAL_SALA4</name>
<organism>
    <name type="scientific">Salmonella agona (strain SL483)</name>
    <dbReference type="NCBI Taxonomy" id="454166"/>
    <lineage>
        <taxon>Bacteria</taxon>
        <taxon>Pseudomonadati</taxon>
        <taxon>Pseudomonadota</taxon>
        <taxon>Gammaproteobacteria</taxon>
        <taxon>Enterobacterales</taxon>
        <taxon>Enterobacteriaceae</taxon>
        <taxon>Salmonella</taxon>
    </lineage>
</organism>
<proteinExistence type="inferred from homology"/>
<sequence length="148" mass="15344">MFDVTLLILLGLAALGFISHNTTVAVSILVLIIVRVTPLNTFFPWIEKQGLTVGIIILTIGVMAPIASGTLPPSTLIHSFVNWKSLVAIAVGVFVSWLGGRGITLMGNQPQLVAGLLVGTVLGVALFRGVPVGPLIAAGLVSLIVGKQ</sequence>
<comment type="subcellular location">
    <subcellularLocation>
        <location evidence="1">Cell membrane</location>
        <topology evidence="1">Multi-pass membrane protein</topology>
    </subcellularLocation>
</comment>
<comment type="similarity">
    <text evidence="1">Belongs to the UPF0756 family.</text>
</comment>
<keyword id="KW-1003">Cell membrane</keyword>
<keyword id="KW-0472">Membrane</keyword>
<keyword id="KW-0812">Transmembrane</keyword>
<keyword id="KW-1133">Transmembrane helix</keyword>
<dbReference type="EMBL" id="CP001138">
    <property type="protein sequence ID" value="ACH48915.1"/>
    <property type="molecule type" value="Genomic_DNA"/>
</dbReference>
<dbReference type="RefSeq" id="WP_000460698.1">
    <property type="nucleotide sequence ID" value="NC_011149.1"/>
</dbReference>
<dbReference type="KEGG" id="sea:SeAg_B1897"/>
<dbReference type="HOGENOM" id="CLU_125889_0_0_6"/>
<dbReference type="Proteomes" id="UP000008819">
    <property type="component" value="Chromosome"/>
</dbReference>
<dbReference type="GO" id="GO:0005886">
    <property type="term" value="C:plasma membrane"/>
    <property type="evidence" value="ECO:0007669"/>
    <property type="project" value="UniProtKB-SubCell"/>
</dbReference>
<dbReference type="HAMAP" id="MF_01874">
    <property type="entry name" value="UPF0756"/>
    <property type="match status" value="1"/>
</dbReference>
<dbReference type="InterPro" id="IPR007382">
    <property type="entry name" value="UPF0756_TM"/>
</dbReference>
<dbReference type="PANTHER" id="PTHR38452">
    <property type="entry name" value="UPF0756 MEMBRANE PROTEIN YEAL"/>
    <property type="match status" value="1"/>
</dbReference>
<dbReference type="PANTHER" id="PTHR38452:SF1">
    <property type="entry name" value="UPF0756 MEMBRANE PROTEIN YEAL"/>
    <property type="match status" value="1"/>
</dbReference>
<dbReference type="Pfam" id="PF04284">
    <property type="entry name" value="DUF441"/>
    <property type="match status" value="1"/>
</dbReference>
<evidence type="ECO:0000255" key="1">
    <source>
        <dbReference type="HAMAP-Rule" id="MF_01874"/>
    </source>
</evidence>